<accession>Q9D937</accession>
<name>CK098_MOUSE</name>
<dbReference type="EMBL" id="AK007390">
    <property type="protein sequence ID" value="BAB25007.1"/>
    <property type="molecule type" value="mRNA"/>
</dbReference>
<dbReference type="EMBL" id="AC129217">
    <property type="status" value="NOT_ANNOTATED_CDS"/>
    <property type="molecule type" value="Genomic_DNA"/>
</dbReference>
<dbReference type="EMBL" id="CH466523">
    <property type="protein sequence ID" value="EDK99404.1"/>
    <property type="molecule type" value="Genomic_DNA"/>
</dbReference>
<dbReference type="EMBL" id="CH466612">
    <property type="protein sequence ID" value="EDL33394.1"/>
    <property type="molecule type" value="Genomic_DNA"/>
</dbReference>
<dbReference type="EMBL" id="BC047099">
    <property type="protein sequence ID" value="AAH47099.1"/>
    <property type="molecule type" value="mRNA"/>
</dbReference>
<dbReference type="EMBL" id="BC058702">
    <property type="protein sequence ID" value="AAH58702.1"/>
    <property type="molecule type" value="mRNA"/>
</dbReference>
<dbReference type="CCDS" id="CCDS29555.1"/>
<dbReference type="RefSeq" id="NP_079739.1">
    <property type="nucleotide sequence ID" value="NM_025463.3"/>
</dbReference>
<dbReference type="SMR" id="Q9D937"/>
<dbReference type="FunCoup" id="Q9D937">
    <property type="interactions" value="33"/>
</dbReference>
<dbReference type="STRING" id="10090.ENSMUSP00000093970"/>
<dbReference type="iPTMnet" id="Q9D937"/>
<dbReference type="PhosphoSitePlus" id="Q9D937"/>
<dbReference type="PaxDb" id="10090-ENSMUSP00000093970"/>
<dbReference type="PeptideAtlas" id="Q9D937"/>
<dbReference type="Pumba" id="Q9D937"/>
<dbReference type="Ensembl" id="ENSMUST00000096251.10">
    <property type="protein sequence ID" value="ENSMUSP00000093970.4"/>
    <property type="gene ID" value="ENSMUSG00000071653.10"/>
</dbReference>
<dbReference type="GeneID" id="66276"/>
<dbReference type="KEGG" id="mmu:66276"/>
<dbReference type="UCSC" id="uc008gnt.2">
    <property type="organism name" value="mouse"/>
</dbReference>
<dbReference type="AGR" id="MGI:1913526"/>
<dbReference type="MGI" id="MGI:1913526">
    <property type="gene designation" value="1810009A15Rik"/>
</dbReference>
<dbReference type="VEuPathDB" id="HostDB:ENSMUSG00000071653"/>
<dbReference type="eggNOG" id="ENOG502S62W">
    <property type="taxonomic scope" value="Eukaryota"/>
</dbReference>
<dbReference type="GeneTree" id="ENSGT00390000002615"/>
<dbReference type="HOGENOM" id="CLU_162769_0_0_1"/>
<dbReference type="InParanoid" id="Q9D937"/>
<dbReference type="OMA" id="INWPRME"/>
<dbReference type="OrthoDB" id="6147870at2759"/>
<dbReference type="PhylomeDB" id="Q9D937"/>
<dbReference type="TreeFam" id="TF332947"/>
<dbReference type="BioGRID-ORCS" id="66276">
    <property type="hits" value="4 hits in 75 CRISPR screens"/>
</dbReference>
<dbReference type="PRO" id="PR:Q9D937"/>
<dbReference type="Proteomes" id="UP000000589">
    <property type="component" value="Chromosome 19"/>
</dbReference>
<dbReference type="RNAct" id="Q9D937">
    <property type="molecule type" value="protein"/>
</dbReference>
<dbReference type="Bgee" id="ENSMUSG00000071653">
    <property type="expression patterns" value="Expressed in layer of retina and 74 other cell types or tissues"/>
</dbReference>
<dbReference type="ExpressionAtlas" id="Q9D937">
    <property type="expression patterns" value="baseline and differential"/>
</dbReference>
<dbReference type="InterPro" id="IPR037691">
    <property type="entry name" value="C11orf98"/>
</dbReference>
<dbReference type="PANTHER" id="PTHR14554:SF1">
    <property type="entry name" value="CHROMOSOME 11 OPEN READING FRAME 98"/>
    <property type="match status" value="1"/>
</dbReference>
<dbReference type="PANTHER" id="PTHR14554">
    <property type="entry name" value="GENE, 49416-RELATED"/>
    <property type="match status" value="1"/>
</dbReference>
<dbReference type="Pfam" id="PF17719">
    <property type="entry name" value="DUF5564"/>
    <property type="match status" value="1"/>
</dbReference>
<sequence length="123" mass="14099">MAPPGGKINRPRTELKKKLFKRRRVLSRDRRRKRQVVGAVIDEGLTTKHHLKKRASSARANITLSGKKRRKLLQQIRLAQKEKAAMEVEAPSKSTRTSQPQPKQQKKIKAPQDVAMEDLEDKS</sequence>
<protein>
    <recommendedName>
        <fullName evidence="1">Uncharacterized protein C11orf98 homolog</fullName>
    </recommendedName>
</protein>
<evidence type="ECO:0000250" key="1">
    <source>
        <dbReference type="UniProtKB" id="E9PRG8"/>
    </source>
</evidence>
<evidence type="ECO:0000256" key="2">
    <source>
        <dbReference type="SAM" id="MobiDB-lite"/>
    </source>
</evidence>
<keyword id="KW-1185">Reference proteome</keyword>
<reference key="1">
    <citation type="journal article" date="2005" name="Science">
        <title>The transcriptional landscape of the mammalian genome.</title>
        <authorList>
            <person name="Carninci P."/>
            <person name="Kasukawa T."/>
            <person name="Katayama S."/>
            <person name="Gough J."/>
            <person name="Frith M.C."/>
            <person name="Maeda N."/>
            <person name="Oyama R."/>
            <person name="Ravasi T."/>
            <person name="Lenhard B."/>
            <person name="Wells C."/>
            <person name="Kodzius R."/>
            <person name="Shimokawa K."/>
            <person name="Bajic V.B."/>
            <person name="Brenner S.E."/>
            <person name="Batalov S."/>
            <person name="Forrest A.R."/>
            <person name="Zavolan M."/>
            <person name="Davis M.J."/>
            <person name="Wilming L.G."/>
            <person name="Aidinis V."/>
            <person name="Allen J.E."/>
            <person name="Ambesi-Impiombato A."/>
            <person name="Apweiler R."/>
            <person name="Aturaliya R.N."/>
            <person name="Bailey T.L."/>
            <person name="Bansal M."/>
            <person name="Baxter L."/>
            <person name="Beisel K.W."/>
            <person name="Bersano T."/>
            <person name="Bono H."/>
            <person name="Chalk A.M."/>
            <person name="Chiu K.P."/>
            <person name="Choudhary V."/>
            <person name="Christoffels A."/>
            <person name="Clutterbuck D.R."/>
            <person name="Crowe M.L."/>
            <person name="Dalla E."/>
            <person name="Dalrymple B.P."/>
            <person name="de Bono B."/>
            <person name="Della Gatta G."/>
            <person name="di Bernardo D."/>
            <person name="Down T."/>
            <person name="Engstrom P."/>
            <person name="Fagiolini M."/>
            <person name="Faulkner G."/>
            <person name="Fletcher C.F."/>
            <person name="Fukushima T."/>
            <person name="Furuno M."/>
            <person name="Futaki S."/>
            <person name="Gariboldi M."/>
            <person name="Georgii-Hemming P."/>
            <person name="Gingeras T.R."/>
            <person name="Gojobori T."/>
            <person name="Green R.E."/>
            <person name="Gustincich S."/>
            <person name="Harbers M."/>
            <person name="Hayashi Y."/>
            <person name="Hensch T.K."/>
            <person name="Hirokawa N."/>
            <person name="Hill D."/>
            <person name="Huminiecki L."/>
            <person name="Iacono M."/>
            <person name="Ikeo K."/>
            <person name="Iwama A."/>
            <person name="Ishikawa T."/>
            <person name="Jakt M."/>
            <person name="Kanapin A."/>
            <person name="Katoh M."/>
            <person name="Kawasawa Y."/>
            <person name="Kelso J."/>
            <person name="Kitamura H."/>
            <person name="Kitano H."/>
            <person name="Kollias G."/>
            <person name="Krishnan S.P."/>
            <person name="Kruger A."/>
            <person name="Kummerfeld S.K."/>
            <person name="Kurochkin I.V."/>
            <person name="Lareau L.F."/>
            <person name="Lazarevic D."/>
            <person name="Lipovich L."/>
            <person name="Liu J."/>
            <person name="Liuni S."/>
            <person name="McWilliam S."/>
            <person name="Madan Babu M."/>
            <person name="Madera M."/>
            <person name="Marchionni L."/>
            <person name="Matsuda H."/>
            <person name="Matsuzawa S."/>
            <person name="Miki H."/>
            <person name="Mignone F."/>
            <person name="Miyake S."/>
            <person name="Morris K."/>
            <person name="Mottagui-Tabar S."/>
            <person name="Mulder N."/>
            <person name="Nakano N."/>
            <person name="Nakauchi H."/>
            <person name="Ng P."/>
            <person name="Nilsson R."/>
            <person name="Nishiguchi S."/>
            <person name="Nishikawa S."/>
            <person name="Nori F."/>
            <person name="Ohara O."/>
            <person name="Okazaki Y."/>
            <person name="Orlando V."/>
            <person name="Pang K.C."/>
            <person name="Pavan W.J."/>
            <person name="Pavesi G."/>
            <person name="Pesole G."/>
            <person name="Petrovsky N."/>
            <person name="Piazza S."/>
            <person name="Reed J."/>
            <person name="Reid J.F."/>
            <person name="Ring B.Z."/>
            <person name="Ringwald M."/>
            <person name="Rost B."/>
            <person name="Ruan Y."/>
            <person name="Salzberg S.L."/>
            <person name="Sandelin A."/>
            <person name="Schneider C."/>
            <person name="Schoenbach C."/>
            <person name="Sekiguchi K."/>
            <person name="Semple C.A."/>
            <person name="Seno S."/>
            <person name="Sessa L."/>
            <person name="Sheng Y."/>
            <person name="Shibata Y."/>
            <person name="Shimada H."/>
            <person name="Shimada K."/>
            <person name="Silva D."/>
            <person name="Sinclair B."/>
            <person name="Sperling S."/>
            <person name="Stupka E."/>
            <person name="Sugiura K."/>
            <person name="Sultana R."/>
            <person name="Takenaka Y."/>
            <person name="Taki K."/>
            <person name="Tammoja K."/>
            <person name="Tan S.L."/>
            <person name="Tang S."/>
            <person name="Taylor M.S."/>
            <person name="Tegner J."/>
            <person name="Teichmann S.A."/>
            <person name="Ueda H.R."/>
            <person name="van Nimwegen E."/>
            <person name="Verardo R."/>
            <person name="Wei C.L."/>
            <person name="Yagi K."/>
            <person name="Yamanishi H."/>
            <person name="Zabarovsky E."/>
            <person name="Zhu S."/>
            <person name="Zimmer A."/>
            <person name="Hide W."/>
            <person name="Bult C."/>
            <person name="Grimmond S.M."/>
            <person name="Teasdale R.D."/>
            <person name="Liu E.T."/>
            <person name="Brusic V."/>
            <person name="Quackenbush J."/>
            <person name="Wahlestedt C."/>
            <person name="Mattick J.S."/>
            <person name="Hume D.A."/>
            <person name="Kai C."/>
            <person name="Sasaki D."/>
            <person name="Tomaru Y."/>
            <person name="Fukuda S."/>
            <person name="Kanamori-Katayama M."/>
            <person name="Suzuki M."/>
            <person name="Aoki J."/>
            <person name="Arakawa T."/>
            <person name="Iida J."/>
            <person name="Imamura K."/>
            <person name="Itoh M."/>
            <person name="Kato T."/>
            <person name="Kawaji H."/>
            <person name="Kawagashira N."/>
            <person name="Kawashima T."/>
            <person name="Kojima M."/>
            <person name="Kondo S."/>
            <person name="Konno H."/>
            <person name="Nakano K."/>
            <person name="Ninomiya N."/>
            <person name="Nishio T."/>
            <person name="Okada M."/>
            <person name="Plessy C."/>
            <person name="Shibata K."/>
            <person name="Shiraki T."/>
            <person name="Suzuki S."/>
            <person name="Tagami M."/>
            <person name="Waki K."/>
            <person name="Watahiki A."/>
            <person name="Okamura-Oho Y."/>
            <person name="Suzuki H."/>
            <person name="Kawai J."/>
            <person name="Hayashizaki Y."/>
        </authorList>
    </citation>
    <scope>NUCLEOTIDE SEQUENCE [LARGE SCALE MRNA]</scope>
    <source>
        <strain>C57BL/6J</strain>
        <tissue>Pancreas</tissue>
    </source>
</reference>
<reference key="2">
    <citation type="journal article" date="2009" name="PLoS Biol.">
        <title>Lineage-specific biology revealed by a finished genome assembly of the mouse.</title>
        <authorList>
            <person name="Church D.M."/>
            <person name="Goodstadt L."/>
            <person name="Hillier L.W."/>
            <person name="Zody M.C."/>
            <person name="Goldstein S."/>
            <person name="She X."/>
            <person name="Bult C.J."/>
            <person name="Agarwala R."/>
            <person name="Cherry J.L."/>
            <person name="DiCuccio M."/>
            <person name="Hlavina W."/>
            <person name="Kapustin Y."/>
            <person name="Meric P."/>
            <person name="Maglott D."/>
            <person name="Birtle Z."/>
            <person name="Marques A.C."/>
            <person name="Graves T."/>
            <person name="Zhou S."/>
            <person name="Teague B."/>
            <person name="Potamousis K."/>
            <person name="Churas C."/>
            <person name="Place M."/>
            <person name="Herschleb J."/>
            <person name="Runnheim R."/>
            <person name="Forrest D."/>
            <person name="Amos-Landgraf J."/>
            <person name="Schwartz D.C."/>
            <person name="Cheng Z."/>
            <person name="Lindblad-Toh K."/>
            <person name="Eichler E.E."/>
            <person name="Ponting C.P."/>
        </authorList>
    </citation>
    <scope>NUCLEOTIDE SEQUENCE [LARGE SCALE GENOMIC DNA]</scope>
    <source>
        <strain>C57BL/6J</strain>
    </source>
</reference>
<reference key="3">
    <citation type="submission" date="2005-07" db="EMBL/GenBank/DDBJ databases">
        <authorList>
            <person name="Mural R.J."/>
            <person name="Adams M.D."/>
            <person name="Myers E.W."/>
            <person name="Smith H.O."/>
            <person name="Venter J.C."/>
        </authorList>
    </citation>
    <scope>NUCLEOTIDE SEQUENCE [LARGE SCALE GENOMIC DNA]</scope>
</reference>
<reference key="4">
    <citation type="journal article" date="2004" name="Genome Res.">
        <title>The status, quality, and expansion of the NIH full-length cDNA project: the Mammalian Gene Collection (MGC).</title>
        <authorList>
            <consortium name="The MGC Project Team"/>
        </authorList>
    </citation>
    <scope>NUCLEOTIDE SEQUENCE [LARGE SCALE MRNA]</scope>
    <source>
        <strain>C57BL/6J</strain>
        <tissue>Embryonic brain</tissue>
        <tissue>Mammary tumor</tissue>
    </source>
</reference>
<reference key="5">
    <citation type="journal article" date="2010" name="Cell">
        <title>A tissue-specific atlas of mouse protein phosphorylation and expression.</title>
        <authorList>
            <person name="Huttlin E.L."/>
            <person name="Jedrychowski M.P."/>
            <person name="Elias J.E."/>
            <person name="Goswami T."/>
            <person name="Rad R."/>
            <person name="Beausoleil S.A."/>
            <person name="Villen J."/>
            <person name="Haas W."/>
            <person name="Sowa M.E."/>
            <person name="Gygi S.P."/>
        </authorList>
    </citation>
    <scope>IDENTIFICATION BY MASS SPECTROMETRY [LARGE SCALE ANALYSIS]</scope>
    <source>
        <tissue>Spleen</tissue>
    </source>
</reference>
<feature type="chain" id="PRO_0000432397" description="Uncharacterized protein C11orf98 homolog">
    <location>
        <begin position="1"/>
        <end position="123"/>
    </location>
</feature>
<feature type="region of interest" description="Disordered" evidence="2">
    <location>
        <begin position="1"/>
        <end position="33"/>
    </location>
</feature>
<feature type="region of interest" description="Disordered" evidence="2">
    <location>
        <begin position="82"/>
        <end position="123"/>
    </location>
</feature>
<feature type="compositionally biased region" description="Basic residues" evidence="2">
    <location>
        <begin position="18"/>
        <end position="33"/>
    </location>
</feature>
<organism>
    <name type="scientific">Mus musculus</name>
    <name type="common">Mouse</name>
    <dbReference type="NCBI Taxonomy" id="10090"/>
    <lineage>
        <taxon>Eukaryota</taxon>
        <taxon>Metazoa</taxon>
        <taxon>Chordata</taxon>
        <taxon>Craniata</taxon>
        <taxon>Vertebrata</taxon>
        <taxon>Euteleostomi</taxon>
        <taxon>Mammalia</taxon>
        <taxon>Eutheria</taxon>
        <taxon>Euarchontoglires</taxon>
        <taxon>Glires</taxon>
        <taxon>Rodentia</taxon>
        <taxon>Myomorpha</taxon>
        <taxon>Muroidea</taxon>
        <taxon>Muridae</taxon>
        <taxon>Murinae</taxon>
        <taxon>Mus</taxon>
        <taxon>Mus</taxon>
    </lineage>
</organism>
<proteinExistence type="evidence at protein level"/>